<proteinExistence type="evidence at protein level"/>
<gene>
    <name type="primary">CYPRO1</name>
</gene>
<protein>
    <recommendedName>
        <fullName>Cyprosin</fullName>
        <ecNumber>3.4.23.-</ecNumber>
    </recommendedName>
</protein>
<keyword id="KW-0064">Aspartyl protease</keyword>
<keyword id="KW-0903">Direct protein sequencing</keyword>
<keyword id="KW-1015">Disulfide bond</keyword>
<keyword id="KW-0325">Glycoprotein</keyword>
<keyword id="KW-0378">Hydrolase</keyword>
<keyword id="KW-0645">Protease</keyword>
<keyword id="KW-0865">Zymogen</keyword>
<organism>
    <name type="scientific">Cynara cardunculus</name>
    <name type="common">Cardoon</name>
    <dbReference type="NCBI Taxonomy" id="4265"/>
    <lineage>
        <taxon>Eukaryota</taxon>
        <taxon>Viridiplantae</taxon>
        <taxon>Streptophyta</taxon>
        <taxon>Embryophyta</taxon>
        <taxon>Tracheophyta</taxon>
        <taxon>Spermatophyta</taxon>
        <taxon>Magnoliopsida</taxon>
        <taxon>eudicotyledons</taxon>
        <taxon>Gunneridae</taxon>
        <taxon>Pentapetalae</taxon>
        <taxon>asterids</taxon>
        <taxon>campanulids</taxon>
        <taxon>Asterales</taxon>
        <taxon>Asteraceae</taxon>
        <taxon>Carduoideae</taxon>
        <taxon>Cardueae</taxon>
        <taxon>Carduinae</taxon>
        <taxon>Cynara</taxon>
    </lineage>
</organism>
<dbReference type="EC" id="3.4.23.-"/>
<dbReference type="EMBL" id="X69193">
    <property type="protein sequence ID" value="CAA48939.1"/>
    <property type="status" value="ALT_SEQ"/>
    <property type="molecule type" value="mRNA"/>
</dbReference>
<dbReference type="PIR" id="S47096">
    <property type="entry name" value="S47096"/>
</dbReference>
<dbReference type="PIR" id="T12049">
    <property type="entry name" value="T12049"/>
</dbReference>
<dbReference type="SMR" id="P40782"/>
<dbReference type="MEROPS" id="A01.A02"/>
<dbReference type="GlyCosmos" id="P40782">
    <property type="glycosylation" value="1 site, No reported glycans"/>
</dbReference>
<dbReference type="GO" id="GO:0004190">
    <property type="term" value="F:aspartic-type endopeptidase activity"/>
    <property type="evidence" value="ECO:0007669"/>
    <property type="project" value="UniProtKB-KW"/>
</dbReference>
<dbReference type="GO" id="GO:0006629">
    <property type="term" value="P:lipid metabolic process"/>
    <property type="evidence" value="ECO:0007669"/>
    <property type="project" value="InterPro"/>
</dbReference>
<dbReference type="GO" id="GO:0006508">
    <property type="term" value="P:proteolysis"/>
    <property type="evidence" value="ECO:0007669"/>
    <property type="project" value="UniProtKB-KW"/>
</dbReference>
<dbReference type="CDD" id="cd06098">
    <property type="entry name" value="phytepsin"/>
    <property type="match status" value="1"/>
</dbReference>
<dbReference type="FunFam" id="2.40.70.10:FF:000115">
    <property type="entry name" value="Lysosomal aspartic protease"/>
    <property type="match status" value="1"/>
</dbReference>
<dbReference type="FunFam" id="2.40.70.10:FF:000002">
    <property type="entry name" value="Vacuolar aspartic proteinase"/>
    <property type="match status" value="1"/>
</dbReference>
<dbReference type="Gene3D" id="2.40.70.10">
    <property type="entry name" value="Acid Proteases"/>
    <property type="match status" value="2"/>
</dbReference>
<dbReference type="Gene3D" id="1.10.225.10">
    <property type="entry name" value="Saposin-like"/>
    <property type="match status" value="1"/>
</dbReference>
<dbReference type="InterPro" id="IPR001461">
    <property type="entry name" value="Aspartic_peptidase_A1"/>
</dbReference>
<dbReference type="InterPro" id="IPR001969">
    <property type="entry name" value="Aspartic_peptidase_AS"/>
</dbReference>
<dbReference type="InterPro" id="IPR033121">
    <property type="entry name" value="PEPTIDASE_A1"/>
</dbReference>
<dbReference type="InterPro" id="IPR021109">
    <property type="entry name" value="Peptidase_aspartic_dom_sf"/>
</dbReference>
<dbReference type="InterPro" id="IPR033869">
    <property type="entry name" value="Phytepsin"/>
</dbReference>
<dbReference type="InterPro" id="IPR007856">
    <property type="entry name" value="SapB_1"/>
</dbReference>
<dbReference type="InterPro" id="IPR008138">
    <property type="entry name" value="SapB_2"/>
</dbReference>
<dbReference type="InterPro" id="IPR011001">
    <property type="entry name" value="Saposin-like"/>
</dbReference>
<dbReference type="InterPro" id="IPR008139">
    <property type="entry name" value="SaposinB_dom"/>
</dbReference>
<dbReference type="PANTHER" id="PTHR47966:SF76">
    <property type="entry name" value="ASPARTIC PROTEINASE A1"/>
    <property type="match status" value="1"/>
</dbReference>
<dbReference type="PANTHER" id="PTHR47966">
    <property type="entry name" value="BETA-SITE APP-CLEAVING ENZYME, ISOFORM A-RELATED"/>
    <property type="match status" value="1"/>
</dbReference>
<dbReference type="Pfam" id="PF00026">
    <property type="entry name" value="Asp"/>
    <property type="match status" value="1"/>
</dbReference>
<dbReference type="Pfam" id="PF05184">
    <property type="entry name" value="SapB_1"/>
    <property type="match status" value="1"/>
</dbReference>
<dbReference type="Pfam" id="PF03489">
    <property type="entry name" value="SapB_2"/>
    <property type="match status" value="1"/>
</dbReference>
<dbReference type="PRINTS" id="PR00792">
    <property type="entry name" value="PEPSIN"/>
</dbReference>
<dbReference type="SMART" id="SM00741">
    <property type="entry name" value="SapB"/>
    <property type="match status" value="1"/>
</dbReference>
<dbReference type="SUPFAM" id="SSF50630">
    <property type="entry name" value="Acid proteases"/>
    <property type="match status" value="1"/>
</dbReference>
<dbReference type="SUPFAM" id="SSF47862">
    <property type="entry name" value="Saposin"/>
    <property type="match status" value="1"/>
</dbReference>
<dbReference type="PROSITE" id="PS00141">
    <property type="entry name" value="ASP_PROTEASE"/>
    <property type="match status" value="2"/>
</dbReference>
<dbReference type="PROSITE" id="PS51767">
    <property type="entry name" value="PEPTIDASE_A1"/>
    <property type="match status" value="1"/>
</dbReference>
<dbReference type="PROSITE" id="PS50015">
    <property type="entry name" value="SAP_B"/>
    <property type="match status" value="2"/>
</dbReference>
<sequence length="473" mass="51564">LKKRKVNILNHPGEHAGSNDANARRKYGVRGNFRDSDGELIALKNYMDAQYFGEIGIGTPPQKFTVIFDTGSSNLWVPSSKCYFSVACLFHSKYRSTDSTTYKKNGKSAAIQYGTGSISGFFSQDSVKLGDLLVKEQDFIEATKEPGITFLAAKFDGILGLGFQEISVGDAVPVWYTMLNQGLVQEPVFSFWLNRNADEQEGGELVFGGVDPNHFKGEHTYVPVTQKGYWQFEMGDVLIGDKTTGFCASGCAAIADSGTSLLAGTTTIVTQINQAIGAAGVMSQQCKSLVDQYGKSMIEMLLSEEQPEKICSQMKLCSFDGSHDTSMIIESVVDKSKGKSSGLPMRCVPCARWVVWMQNQIRQNETEENIINYVDKLCERLPSPMGESAVDCSSLSSMPNIAFTVGGKTFNLSPEQYVLKVGEGATAQCISGFTAMDVAPPHGPLWILGDVFMGQYHTVFDYGNLRVGFAEAA</sequence>
<evidence type="ECO:0000255" key="1"/>
<evidence type="ECO:0000255" key="2">
    <source>
        <dbReference type="PROSITE-ProRule" id="PRU00415"/>
    </source>
</evidence>
<evidence type="ECO:0000255" key="3">
    <source>
        <dbReference type="PROSITE-ProRule" id="PRU01103"/>
    </source>
</evidence>
<evidence type="ECO:0000255" key="4">
    <source>
        <dbReference type="PROSITE-ProRule" id="PRU10094"/>
    </source>
</evidence>
<evidence type="ECO:0000305" key="5"/>
<comment type="tissue specificity">
    <text>Mostly present in the violet parts of styles and corollas of mature flowers.</text>
</comment>
<comment type="developmental stage">
    <text>Expressed in early stages of floral development and switched off at maturation of the flower.</text>
</comment>
<comment type="similarity">
    <text evidence="5">Belongs to the peptidase A1 family.</text>
</comment>
<feature type="propeptide" id="PRO_0000025899" description="Activation peptide" evidence="1">
    <location>
        <begin position="1" status="less than"/>
        <end position="33"/>
    </location>
</feature>
<feature type="chain" id="PRO_0000025900" description="Cyprosin">
    <location>
        <begin position="34"/>
        <end position="473"/>
    </location>
</feature>
<feature type="domain" description="Peptidase A1" evidence="3">
    <location>
        <begin position="51"/>
        <end position="470"/>
    </location>
</feature>
<feature type="domain" description="Saposin B-type" evidence="2">
    <location>
        <begin position="281"/>
        <end position="384"/>
    </location>
</feature>
<feature type="active site" evidence="4">
    <location>
        <position position="69"/>
    </location>
</feature>
<feature type="active site" evidence="4">
    <location>
        <position position="256"/>
    </location>
</feature>
<feature type="glycosylation site" description="N-linked (GlcNAc...) asparagine" evidence="2">
    <location>
        <position position="364"/>
    </location>
</feature>
<feature type="disulfide bond" evidence="2">
    <location>
        <begin position="82"/>
        <end position="88"/>
    </location>
</feature>
<feature type="disulfide bond" evidence="2">
    <location>
        <begin position="247"/>
        <end position="251"/>
    </location>
</feature>
<feature type="disulfide bond" evidence="2">
    <location>
        <begin position="286"/>
        <end position="378"/>
    </location>
</feature>
<feature type="disulfide bond" evidence="2">
    <location>
        <begin position="311"/>
        <end position="350"/>
    </location>
</feature>
<feature type="disulfide bond" evidence="2">
    <location>
        <begin position="317"/>
        <end position="347"/>
    </location>
</feature>
<feature type="disulfide bond" evidence="2">
    <location>
        <begin position="392"/>
        <end position="429"/>
    </location>
</feature>
<feature type="non-terminal residue">
    <location>
        <position position="1"/>
    </location>
</feature>
<name>CYPR1_CYNCA</name>
<reference key="1">
    <citation type="journal article" date="1994" name="Plant Mol. Biol.">
        <title>Isolation and characterization of a cDNA from flowers of Cynara cardunculus encoding cyprosin (an aspartic proteinase) and its use to study the organ-specific expression of cyprosin.</title>
        <authorList>
            <person name="Cordeiro M.C."/>
            <person name="Xue Z.-T."/>
            <person name="Pietrzak M."/>
            <person name="Pais M.S."/>
            <person name="Brodelius P.E."/>
        </authorList>
    </citation>
    <scope>NUCLEOTIDE SEQUENCE [MRNA]</scope>
    <scope>PROTEIN SEQUENCE OF 178-186</scope>
    <source>
        <tissue>Flower bud</tissue>
    </source>
</reference>
<accession>P40782</accession>